<organism>
    <name type="scientific">Arabidopsis thaliana</name>
    <name type="common">Mouse-ear cress</name>
    <dbReference type="NCBI Taxonomy" id="3702"/>
    <lineage>
        <taxon>Eukaryota</taxon>
        <taxon>Viridiplantae</taxon>
        <taxon>Streptophyta</taxon>
        <taxon>Embryophyta</taxon>
        <taxon>Tracheophyta</taxon>
        <taxon>Spermatophyta</taxon>
        <taxon>Magnoliopsida</taxon>
        <taxon>eudicotyledons</taxon>
        <taxon>Gunneridae</taxon>
        <taxon>Pentapetalae</taxon>
        <taxon>rosids</taxon>
        <taxon>malvids</taxon>
        <taxon>Brassicales</taxon>
        <taxon>Brassicaceae</taxon>
        <taxon>Camelineae</taxon>
        <taxon>Arabidopsis</taxon>
    </lineage>
</organism>
<dbReference type="EC" id="5.3.3.21" evidence="3"/>
<dbReference type="EMBL" id="AB017070">
    <property type="protein sequence ID" value="BAB10591.1"/>
    <property type="molecule type" value="Genomic_DNA"/>
</dbReference>
<dbReference type="EMBL" id="CP002688">
    <property type="protein sequence ID" value="AED94936.1"/>
    <property type="molecule type" value="Genomic_DNA"/>
</dbReference>
<dbReference type="EMBL" id="CP002688">
    <property type="protein sequence ID" value="AED94937.1"/>
    <property type="molecule type" value="Genomic_DNA"/>
</dbReference>
<dbReference type="EMBL" id="AY072351">
    <property type="protein sequence ID" value="AAL62343.1"/>
    <property type="molecule type" value="mRNA"/>
</dbReference>
<dbReference type="EMBL" id="BT002198">
    <property type="protein sequence ID" value="AAN72209.1"/>
    <property type="molecule type" value="mRNA"/>
</dbReference>
<dbReference type="EMBL" id="AK316991">
    <property type="protein sequence ID" value="BAH19686.1"/>
    <property type="molecule type" value="mRNA"/>
</dbReference>
<dbReference type="RefSeq" id="NP_001078698.1">
    <molecule id="Q9FHR8-2"/>
    <property type="nucleotide sequence ID" value="NM_001085229.1"/>
</dbReference>
<dbReference type="RefSeq" id="NP_199142.1">
    <molecule id="Q9FHR8-1"/>
    <property type="nucleotide sequence ID" value="NM_123694.4"/>
</dbReference>
<dbReference type="SMR" id="Q9FHR8"/>
<dbReference type="FunCoup" id="Q9FHR8">
    <property type="interactions" value="3105"/>
</dbReference>
<dbReference type="IntAct" id="Q9FHR8">
    <property type="interactions" value="5"/>
</dbReference>
<dbReference type="MINT" id="Q9FHR8"/>
<dbReference type="STRING" id="3702.Q9FHR8"/>
<dbReference type="iPTMnet" id="Q9FHR8"/>
<dbReference type="PaxDb" id="3702-AT5G43280.1"/>
<dbReference type="ProteomicsDB" id="224683">
    <molecule id="Q9FHR8-1"/>
</dbReference>
<dbReference type="EnsemblPlants" id="AT5G43280.1">
    <molecule id="Q9FHR8-1"/>
    <property type="protein sequence ID" value="AT5G43280.1"/>
    <property type="gene ID" value="AT5G43280"/>
</dbReference>
<dbReference type="EnsemblPlants" id="AT5G43280.2">
    <molecule id="Q9FHR8-2"/>
    <property type="protein sequence ID" value="AT5G43280.2"/>
    <property type="gene ID" value="AT5G43280"/>
</dbReference>
<dbReference type="GeneID" id="834346"/>
<dbReference type="Gramene" id="AT5G43280.1">
    <molecule id="Q9FHR8-1"/>
    <property type="protein sequence ID" value="AT5G43280.1"/>
    <property type="gene ID" value="AT5G43280"/>
</dbReference>
<dbReference type="Gramene" id="AT5G43280.2">
    <molecule id="Q9FHR8-2"/>
    <property type="protein sequence ID" value="AT5G43280.2"/>
    <property type="gene ID" value="AT5G43280"/>
</dbReference>
<dbReference type="KEGG" id="ath:AT5G43280"/>
<dbReference type="Araport" id="AT5G43280"/>
<dbReference type="TAIR" id="AT5G43280">
    <property type="gene designation" value="DCI1"/>
</dbReference>
<dbReference type="eggNOG" id="KOG1681">
    <property type="taxonomic scope" value="Eukaryota"/>
</dbReference>
<dbReference type="HOGENOM" id="CLU_009834_7_0_1"/>
<dbReference type="InParanoid" id="Q9FHR8"/>
<dbReference type="OMA" id="QYVAHVE"/>
<dbReference type="OrthoDB" id="14970at2759"/>
<dbReference type="PhylomeDB" id="Q9FHR8"/>
<dbReference type="BioCyc" id="ARA:AT5G43280-MONOMER"/>
<dbReference type="BioCyc" id="MetaCyc:AT5G43280-MONOMER"/>
<dbReference type="UniPathway" id="UPA00659"/>
<dbReference type="PRO" id="PR:Q9FHR8"/>
<dbReference type="Proteomes" id="UP000006548">
    <property type="component" value="Chromosome 5"/>
</dbReference>
<dbReference type="ExpressionAtlas" id="Q9FHR8">
    <property type="expression patterns" value="baseline and differential"/>
</dbReference>
<dbReference type="GO" id="GO:0005777">
    <property type="term" value="C:peroxisome"/>
    <property type="evidence" value="ECO:0000314"/>
    <property type="project" value="TAIR"/>
</dbReference>
<dbReference type="GO" id="GO:0051750">
    <property type="term" value="F:delta(3,5)-delta(2,4)-dienoyl-CoA isomerase activity"/>
    <property type="evidence" value="ECO:0000314"/>
    <property type="project" value="TAIR"/>
</dbReference>
<dbReference type="GO" id="GO:0006635">
    <property type="term" value="P:fatty acid beta-oxidation"/>
    <property type="evidence" value="ECO:0000314"/>
    <property type="project" value="UniProtKB"/>
</dbReference>
<dbReference type="GO" id="GO:0009062">
    <property type="term" value="P:fatty acid catabolic process"/>
    <property type="evidence" value="ECO:0000304"/>
    <property type="project" value="TAIR"/>
</dbReference>
<dbReference type="CDD" id="cd06558">
    <property type="entry name" value="crotonase-like"/>
    <property type="match status" value="1"/>
</dbReference>
<dbReference type="FunFam" id="1.10.12.10:FF:000004">
    <property type="entry name" value="Delta3,5-delta2,4-dienoyl-CoA isomerase"/>
    <property type="match status" value="1"/>
</dbReference>
<dbReference type="FunFam" id="3.90.226.10:FF:000024">
    <property type="entry name" value="Delta3,5-delta2,4-dienoyl-CoA isomerase"/>
    <property type="match status" value="1"/>
</dbReference>
<dbReference type="Gene3D" id="3.90.226.10">
    <property type="entry name" value="2-enoyl-CoA Hydratase, Chain A, domain 1"/>
    <property type="match status" value="1"/>
</dbReference>
<dbReference type="Gene3D" id="1.10.12.10">
    <property type="entry name" value="Lyase 2-enoyl-coa Hydratase, Chain A, domain 2"/>
    <property type="match status" value="1"/>
</dbReference>
<dbReference type="InterPro" id="IPR029045">
    <property type="entry name" value="ClpP/crotonase-like_dom_sf"/>
</dbReference>
<dbReference type="InterPro" id="IPR045002">
    <property type="entry name" value="Ech1-like"/>
</dbReference>
<dbReference type="InterPro" id="IPR018376">
    <property type="entry name" value="Enoyl-CoA_hyd/isom_CS"/>
</dbReference>
<dbReference type="InterPro" id="IPR001753">
    <property type="entry name" value="Enoyl-CoA_hydra/iso"/>
</dbReference>
<dbReference type="InterPro" id="IPR014748">
    <property type="entry name" value="Enoyl-CoA_hydra_C"/>
</dbReference>
<dbReference type="NCBIfam" id="NF004794">
    <property type="entry name" value="PRK06142.1"/>
    <property type="match status" value="1"/>
</dbReference>
<dbReference type="PANTHER" id="PTHR43149:SF1">
    <property type="entry name" value="DELTA(3,5)-DELTA(2,4)-DIENOYL-COA ISOMERASE, MITOCHONDRIAL"/>
    <property type="match status" value="1"/>
</dbReference>
<dbReference type="PANTHER" id="PTHR43149">
    <property type="entry name" value="ENOYL-COA HYDRATASE"/>
    <property type="match status" value="1"/>
</dbReference>
<dbReference type="Pfam" id="PF00378">
    <property type="entry name" value="ECH_1"/>
    <property type="match status" value="1"/>
</dbReference>
<dbReference type="SUPFAM" id="SSF52096">
    <property type="entry name" value="ClpP/crotonase"/>
    <property type="match status" value="1"/>
</dbReference>
<dbReference type="PROSITE" id="PS00166">
    <property type="entry name" value="ENOYL_COA_HYDRATASE"/>
    <property type="match status" value="1"/>
</dbReference>
<protein>
    <recommendedName>
        <fullName evidence="5">Delta(3,5)-Delta(2,4)-dienoyl-CoA isomerase, peroxisomal</fullName>
        <shortName evidence="4">AtDCI1</shortName>
        <ecNumber evidence="3">5.3.3.21</ecNumber>
    </recommendedName>
</protein>
<reference key="1">
    <citation type="journal article" date="1999" name="DNA Res.">
        <title>Structural analysis of Arabidopsis thaliana chromosome 5. IX. Sequence features of the regions of 1,011,550 bp covered by seventeen P1 and TAC clones.</title>
        <authorList>
            <person name="Kaneko T."/>
            <person name="Katoh T."/>
            <person name="Sato S."/>
            <person name="Nakamura Y."/>
            <person name="Asamizu E."/>
            <person name="Kotani H."/>
            <person name="Miyajima N."/>
            <person name="Tabata S."/>
        </authorList>
    </citation>
    <scope>NUCLEOTIDE SEQUENCE [LARGE SCALE GENOMIC DNA]</scope>
    <source>
        <strain>cv. Columbia</strain>
    </source>
</reference>
<reference key="2">
    <citation type="journal article" date="2017" name="Plant J.">
        <title>Araport11: a complete reannotation of the Arabidopsis thaliana reference genome.</title>
        <authorList>
            <person name="Cheng C.Y."/>
            <person name="Krishnakumar V."/>
            <person name="Chan A.P."/>
            <person name="Thibaud-Nissen F."/>
            <person name="Schobel S."/>
            <person name="Town C.D."/>
        </authorList>
    </citation>
    <scope>GENOME REANNOTATION</scope>
    <source>
        <strain>cv. Columbia</strain>
    </source>
</reference>
<reference key="3">
    <citation type="journal article" date="2003" name="Science">
        <title>Empirical analysis of transcriptional activity in the Arabidopsis genome.</title>
        <authorList>
            <person name="Yamada K."/>
            <person name="Lim J."/>
            <person name="Dale J.M."/>
            <person name="Chen H."/>
            <person name="Shinn P."/>
            <person name="Palm C.J."/>
            <person name="Southwick A.M."/>
            <person name="Wu H.C."/>
            <person name="Kim C.J."/>
            <person name="Nguyen M."/>
            <person name="Pham P.K."/>
            <person name="Cheuk R.F."/>
            <person name="Karlin-Newmann G."/>
            <person name="Liu S.X."/>
            <person name="Lam B."/>
            <person name="Sakano H."/>
            <person name="Wu T."/>
            <person name="Yu G."/>
            <person name="Miranda M."/>
            <person name="Quach H.L."/>
            <person name="Tripp M."/>
            <person name="Chang C.H."/>
            <person name="Lee J.M."/>
            <person name="Toriumi M.J."/>
            <person name="Chan M.M."/>
            <person name="Tang C.C."/>
            <person name="Onodera C.S."/>
            <person name="Deng J.M."/>
            <person name="Akiyama K."/>
            <person name="Ansari Y."/>
            <person name="Arakawa T."/>
            <person name="Banh J."/>
            <person name="Banno F."/>
            <person name="Bowser L."/>
            <person name="Brooks S.Y."/>
            <person name="Carninci P."/>
            <person name="Chao Q."/>
            <person name="Choy N."/>
            <person name="Enju A."/>
            <person name="Goldsmith A.D."/>
            <person name="Gurjal M."/>
            <person name="Hansen N.F."/>
            <person name="Hayashizaki Y."/>
            <person name="Johnson-Hopson C."/>
            <person name="Hsuan V.W."/>
            <person name="Iida K."/>
            <person name="Karnes M."/>
            <person name="Khan S."/>
            <person name="Koesema E."/>
            <person name="Ishida J."/>
            <person name="Jiang P.X."/>
            <person name="Jones T."/>
            <person name="Kawai J."/>
            <person name="Kamiya A."/>
            <person name="Meyers C."/>
            <person name="Nakajima M."/>
            <person name="Narusaka M."/>
            <person name="Seki M."/>
            <person name="Sakurai T."/>
            <person name="Satou M."/>
            <person name="Tamse R."/>
            <person name="Vaysberg M."/>
            <person name="Wallender E.K."/>
            <person name="Wong C."/>
            <person name="Yamamura Y."/>
            <person name="Yuan S."/>
            <person name="Shinozaki K."/>
            <person name="Davis R.W."/>
            <person name="Theologis A."/>
            <person name="Ecker J.R."/>
        </authorList>
    </citation>
    <scope>NUCLEOTIDE SEQUENCE [LARGE SCALE MRNA] (ISOFORM 1)</scope>
    <source>
        <strain>cv. Columbia</strain>
    </source>
</reference>
<reference key="4">
    <citation type="journal article" date="2009" name="DNA Res.">
        <title>Analysis of multiple occurrences of alternative splicing events in Arabidopsis thaliana using novel sequenced full-length cDNAs.</title>
        <authorList>
            <person name="Iida K."/>
            <person name="Fukami-Kobayashi K."/>
            <person name="Toyoda A."/>
            <person name="Sakaki Y."/>
            <person name="Kobayashi M."/>
            <person name="Seki M."/>
            <person name="Shinozaki K."/>
        </authorList>
    </citation>
    <scope>NUCLEOTIDE SEQUENCE [LARGE SCALE MRNA] (ISOFORM 2)</scope>
    <source>
        <strain>cv. Columbia</strain>
    </source>
</reference>
<reference key="5">
    <citation type="journal article" date="2005" name="Plant Physiol.">
        <title>Molecular identification and characterization of the Arabidopsis delta(3,5),delta(2,4)-dienoyl-coenzyme A isomerase, a peroxisomal enzyme participating in the beta-oxidation cycle of unsaturated fatty acids.</title>
        <authorList>
            <person name="Goepfert S."/>
            <person name="Vidoudez C."/>
            <person name="Rezzonico E."/>
            <person name="Hiltunen J.K."/>
            <person name="Poirier Y."/>
        </authorList>
    </citation>
    <scope>FUNCTION</scope>
    <scope>CATALYTIC ACTIVITY</scope>
    <scope>SUBCELLULAR LOCATION</scope>
    <scope>TISSUE SPECIFICITY</scope>
</reference>
<comment type="function">
    <text evidence="3">Converts 3,5-dienoyl-CoAs to the corresponding 2,4-dienoyl-CoAs. Involved in degradation of unsaturated fatty acids.</text>
</comment>
<comment type="catalytic activity">
    <reaction evidence="3">
        <text>a (3E,5Z)-dienoyl-CoA = a (2E,4E)-(5,6-saturated)-dienoyl-CoA</text>
        <dbReference type="Rhea" id="RHEA:45240"/>
        <dbReference type="ChEBI" id="CHEBI:85110"/>
        <dbReference type="ChEBI" id="CHEBI:85111"/>
        <dbReference type="EC" id="5.3.3.21"/>
    </reaction>
</comment>
<comment type="pathway">
    <text evidence="5">Lipid metabolism; fatty acid beta-oxidation.</text>
</comment>
<comment type="subcellular location">
    <subcellularLocation>
        <location evidence="3">Peroxisome</location>
    </subcellularLocation>
</comment>
<comment type="alternative products">
    <event type="alternative splicing"/>
    <isoform>
        <id>Q9FHR8-1</id>
        <name>1</name>
        <sequence type="displayed"/>
    </isoform>
    <isoform>
        <id>Q9FHR8-2</id>
        <name>2</name>
        <sequence type="described" ref="VSP_058073 VSP_058074"/>
    </isoform>
</comment>
<comment type="tissue specificity">
    <text evidence="3">Expressed in roots, leaves, stems and flowers.</text>
</comment>
<comment type="similarity">
    <text evidence="5">Belongs to the enoyl-CoA hydratase/isomerase family.</text>
</comment>
<keyword id="KW-0007">Acetylation</keyword>
<keyword id="KW-0025">Alternative splicing</keyword>
<keyword id="KW-0276">Fatty acid metabolism</keyword>
<keyword id="KW-0413">Isomerase</keyword>
<keyword id="KW-0443">Lipid metabolism</keyword>
<keyword id="KW-0576">Peroxisome</keyword>
<keyword id="KW-1185">Reference proteome</keyword>
<proteinExistence type="evidence at protein level"/>
<evidence type="ECO:0000250" key="1">
    <source>
        <dbReference type="UniProtKB" id="P42126"/>
    </source>
</evidence>
<evidence type="ECO:0000250" key="2">
    <source>
        <dbReference type="UniProtKB" id="Q6NL24"/>
    </source>
</evidence>
<evidence type="ECO:0000269" key="3">
    <source>
    </source>
</evidence>
<evidence type="ECO:0000303" key="4">
    <source>
    </source>
</evidence>
<evidence type="ECO:0000305" key="5"/>
<evidence type="ECO:0000312" key="6">
    <source>
        <dbReference type="Araport" id="AT5G43280"/>
    </source>
</evidence>
<name>DCI1_ARATH</name>
<sequence length="278" mass="29920">MTMESYKTLEIIRKNTDSSVFHLIINRPSHLNALSLDFFIEFPKALSSLDQNPDVSVIILSGAGKHFCSGIDLNSLSSISTQSSSGNDRGRSSEQLRRKIKSMQAAITAIEQCRKPVIAAIHGACIGGGVDLITACDIRYCSEDAFFSIKEVDLAIVADLGTLQRLPSIVGYANAMELALTARRFSGSEAKDLGLVSKVFGSKSELDNGVTTIAEGIGGKSPLAVTGTKAVLLRSREVSVEQGLDYVATWNSAMLISDDLNEAVSAQMMKRKPRFAKL</sequence>
<gene>
    <name evidence="4" type="primary">DCI1</name>
    <name evidence="6" type="ordered locus">At5g43280</name>
</gene>
<feature type="chain" id="PRO_0000435428" description="Delta(3,5)-Delta(2,4)-dienoyl-CoA isomerase, peroxisomal">
    <location>
        <begin position="1"/>
        <end position="278"/>
    </location>
</feature>
<feature type="short sequence motif" description="Microbody targeting signal" evidence="5">
    <location>
        <begin position="276"/>
        <end position="278"/>
    </location>
</feature>
<feature type="binding site" evidence="1">
    <location>
        <begin position="69"/>
        <end position="73"/>
    </location>
    <ligand>
        <name>substrate</name>
    </ligand>
</feature>
<feature type="binding site" evidence="1">
    <location>
        <position position="128"/>
    </location>
    <ligand>
        <name>substrate</name>
    </ligand>
</feature>
<feature type="site" description="Important for catalytic activity" evidence="1">
    <location>
        <position position="151"/>
    </location>
</feature>
<feature type="modified residue" description="N-acetylmethionine" evidence="2">
    <location>
        <position position="1"/>
    </location>
</feature>
<feature type="splice variant" id="VSP_058073" description="In isoform 2.">
    <original>GIGGK</original>
    <variation>DSGMI</variation>
    <location>
        <begin position="216"/>
        <end position="220"/>
    </location>
</feature>
<feature type="splice variant" id="VSP_058074" description="In isoform 2.">
    <location>
        <begin position="221"/>
        <end position="278"/>
    </location>
</feature>
<accession>Q9FHR8</accession>
<accession>A8MRJ9</accession>